<organism>
    <name type="scientific">Homo sapiens</name>
    <name type="common">Human</name>
    <dbReference type="NCBI Taxonomy" id="9606"/>
    <lineage>
        <taxon>Eukaryota</taxon>
        <taxon>Metazoa</taxon>
        <taxon>Chordata</taxon>
        <taxon>Craniata</taxon>
        <taxon>Vertebrata</taxon>
        <taxon>Euteleostomi</taxon>
        <taxon>Mammalia</taxon>
        <taxon>Eutheria</taxon>
        <taxon>Euarchontoglires</taxon>
        <taxon>Primates</taxon>
        <taxon>Haplorrhini</taxon>
        <taxon>Catarrhini</taxon>
        <taxon>Hominidae</taxon>
        <taxon>Homo</taxon>
    </lineage>
</organism>
<comment type="function">
    <text evidence="1">May be involved in the negative control of osteogenic differentiation of osteochondrogenic precursor cells in peripheral zones of fetal cartilage and at the cartilage-bone interface.</text>
</comment>
<comment type="subcellular location">
    <subcellularLocation>
        <location evidence="1">Secreted</location>
        <location evidence="1">Extracellular space</location>
        <location evidence="1">Extracellular matrix</location>
    </subcellularLocation>
</comment>
<comment type="tissue specificity">
    <text evidence="3">Predominantly expressed in resting chondrocytes.</text>
</comment>
<comment type="PTM">
    <text evidence="1">Proteolytically cleaved by a furin-like convertase to generate a persistent C-terminal fragment found in almost the entire cartilage matrix, and affecting osteoblast differentiation.</text>
</comment>
<comment type="PTM">
    <text evidence="1">Sulfated on tyrosine residues.</text>
</comment>
<comment type="similarity">
    <text evidence="4">Belongs to the UCMA family.</text>
</comment>
<evidence type="ECO:0000250" key="1"/>
<evidence type="ECO:0000255" key="2"/>
<evidence type="ECO:0000269" key="3">
    <source>
    </source>
</evidence>
<evidence type="ECO:0000305" key="4"/>
<dbReference type="EMBL" id="AL138764">
    <property type="status" value="NOT_ANNOTATED_CDS"/>
    <property type="molecule type" value="Genomic_DNA"/>
</dbReference>
<dbReference type="EMBL" id="BC018068">
    <property type="protein sequence ID" value="AAH18068.2"/>
    <property type="molecule type" value="mRNA"/>
</dbReference>
<dbReference type="CCDS" id="CCDS31147.1"/>
<dbReference type="RefSeq" id="NP_001290047.1">
    <property type="nucleotide sequence ID" value="NM_001303118.1"/>
</dbReference>
<dbReference type="RefSeq" id="NP_001290048.1">
    <property type="nucleotide sequence ID" value="NM_001303119.1"/>
</dbReference>
<dbReference type="RefSeq" id="NP_660357.2">
    <property type="nucleotide sequence ID" value="NM_145314.3"/>
</dbReference>
<dbReference type="BioGRID" id="128678">
    <property type="interactions" value="1"/>
</dbReference>
<dbReference type="FunCoup" id="Q8WVF2">
    <property type="interactions" value="6"/>
</dbReference>
<dbReference type="STRING" id="9606.ENSP00000367952"/>
<dbReference type="BioMuta" id="UCMA"/>
<dbReference type="DMDM" id="68565241"/>
<dbReference type="jPOST" id="Q8WVF2"/>
<dbReference type="PaxDb" id="9606-ENSP00000367952"/>
<dbReference type="PeptideAtlas" id="Q8WVF2"/>
<dbReference type="Antibodypedia" id="24782">
    <property type="antibodies" value="77 antibodies from 23 providers"/>
</dbReference>
<dbReference type="DNASU" id="221044"/>
<dbReference type="Ensembl" id="ENST00000378681.8">
    <property type="protein sequence ID" value="ENSP00000367952.3"/>
    <property type="gene ID" value="ENSG00000165623.10"/>
</dbReference>
<dbReference type="GeneID" id="221044"/>
<dbReference type="KEGG" id="hsa:221044"/>
<dbReference type="MANE-Select" id="ENST00000378681.8">
    <property type="protein sequence ID" value="ENSP00000367952.3"/>
    <property type="RefSeq nucleotide sequence ID" value="NM_145314.3"/>
    <property type="RefSeq protein sequence ID" value="NP_660357.2"/>
</dbReference>
<dbReference type="UCSC" id="uc001imd.4">
    <property type="organism name" value="human"/>
</dbReference>
<dbReference type="AGR" id="HGNC:25205"/>
<dbReference type="CTD" id="221044"/>
<dbReference type="DisGeNET" id="221044"/>
<dbReference type="GeneCards" id="UCMA"/>
<dbReference type="HGNC" id="HGNC:25205">
    <property type="gene designation" value="UCMA"/>
</dbReference>
<dbReference type="HPA" id="ENSG00000165623">
    <property type="expression patterns" value="Tissue enhanced (brain)"/>
</dbReference>
<dbReference type="neXtProt" id="NX_Q8WVF2"/>
<dbReference type="OpenTargets" id="ENSG00000165623"/>
<dbReference type="PharmGKB" id="PA164727494"/>
<dbReference type="VEuPathDB" id="HostDB:ENSG00000165623"/>
<dbReference type="eggNOG" id="ENOG502S1J9">
    <property type="taxonomic scope" value="Eukaryota"/>
</dbReference>
<dbReference type="GeneTree" id="ENSGT00390000011492"/>
<dbReference type="InParanoid" id="Q8WVF2"/>
<dbReference type="OMA" id="TMLQEGT"/>
<dbReference type="OrthoDB" id="8907123at2759"/>
<dbReference type="PAN-GO" id="Q8WVF2">
    <property type="GO annotations" value="3 GO annotations based on evolutionary models"/>
</dbReference>
<dbReference type="PhylomeDB" id="Q8WVF2"/>
<dbReference type="TreeFam" id="TF332568"/>
<dbReference type="PathwayCommons" id="Q8WVF2"/>
<dbReference type="Reactome" id="R-HSA-8940973">
    <property type="pathway name" value="RUNX2 regulates osteoblast differentiation"/>
</dbReference>
<dbReference type="SignaLink" id="Q8WVF2"/>
<dbReference type="BioGRID-ORCS" id="221044">
    <property type="hits" value="17 hits in 1139 CRISPR screens"/>
</dbReference>
<dbReference type="ChiTaRS" id="UCMA">
    <property type="organism name" value="human"/>
</dbReference>
<dbReference type="GenomeRNAi" id="221044"/>
<dbReference type="Pharos" id="Q8WVF2">
    <property type="development level" value="Tbio"/>
</dbReference>
<dbReference type="PRO" id="PR:Q8WVF2"/>
<dbReference type="Proteomes" id="UP000005640">
    <property type="component" value="Chromosome 10"/>
</dbReference>
<dbReference type="RNAct" id="Q8WVF2">
    <property type="molecule type" value="protein"/>
</dbReference>
<dbReference type="Bgee" id="ENSG00000165623">
    <property type="expression patterns" value="Expressed in cartilage tissue and 43 other cell types or tissues"/>
</dbReference>
<dbReference type="ExpressionAtlas" id="Q8WVF2">
    <property type="expression patterns" value="baseline and differential"/>
</dbReference>
<dbReference type="GO" id="GO:0005737">
    <property type="term" value="C:cytoplasm"/>
    <property type="evidence" value="ECO:0007669"/>
    <property type="project" value="Ensembl"/>
</dbReference>
<dbReference type="GO" id="GO:0031012">
    <property type="term" value="C:extracellular matrix"/>
    <property type="evidence" value="ECO:0000318"/>
    <property type="project" value="GO_Central"/>
</dbReference>
<dbReference type="GO" id="GO:0005576">
    <property type="term" value="C:extracellular region"/>
    <property type="evidence" value="ECO:0007669"/>
    <property type="project" value="UniProtKB-KW"/>
</dbReference>
<dbReference type="GO" id="GO:0036122">
    <property type="term" value="F:BMP binding"/>
    <property type="evidence" value="ECO:0000314"/>
    <property type="project" value="MGI"/>
</dbReference>
<dbReference type="GO" id="GO:0048706">
    <property type="term" value="P:embryonic skeletal system development"/>
    <property type="evidence" value="ECO:0000318"/>
    <property type="project" value="GO_Central"/>
</dbReference>
<dbReference type="GO" id="GO:0045668">
    <property type="term" value="P:negative regulation of osteoblast differentiation"/>
    <property type="evidence" value="ECO:0007669"/>
    <property type="project" value="Ensembl"/>
</dbReference>
<dbReference type="GO" id="GO:0060392">
    <property type="term" value="P:negative regulation of SMAD protein signal transduction"/>
    <property type="evidence" value="ECO:0007669"/>
    <property type="project" value="Ensembl"/>
</dbReference>
<dbReference type="GO" id="GO:0001649">
    <property type="term" value="P:osteoblast differentiation"/>
    <property type="evidence" value="ECO:0007669"/>
    <property type="project" value="Ensembl"/>
</dbReference>
<dbReference type="InterPro" id="IPR031386">
    <property type="entry name" value="UCMA"/>
</dbReference>
<dbReference type="PANTHER" id="PTHR28647">
    <property type="entry name" value="UNIQUE CARTILAGE MATRIX-ASSOCIATED PROTEIN"/>
    <property type="match status" value="1"/>
</dbReference>
<dbReference type="PANTHER" id="PTHR28647:SF2">
    <property type="entry name" value="UNIQUE CARTILAGE MATRIX-ASSOCIATED PROTEIN"/>
    <property type="match status" value="1"/>
</dbReference>
<dbReference type="Pfam" id="PF17085">
    <property type="entry name" value="UCMA"/>
    <property type="match status" value="1"/>
</dbReference>
<accession>Q8WVF2</accession>
<keyword id="KW-0175">Coiled coil</keyword>
<keyword id="KW-0272">Extracellular matrix</keyword>
<keyword id="KW-1267">Proteomics identification</keyword>
<keyword id="KW-1185">Reference proteome</keyword>
<keyword id="KW-0964">Secreted</keyword>
<keyword id="KW-0732">Signal</keyword>
<keyword id="KW-0765">Sulfation</keyword>
<name>UCMA_HUMAN</name>
<protein>
    <recommendedName>
        <fullName>Unique cartilage matrix-associated protein</fullName>
    </recommendedName>
    <component>
        <recommendedName>
            <fullName>Unique cartilage matrix-associated protein C-terminal fragment</fullName>
            <shortName>Ucma-C</shortName>
        </recommendedName>
        <alternativeName>
            <fullName>Gla-rich protein</fullName>
            <shortName>GRP</shortName>
        </alternativeName>
    </component>
</protein>
<feature type="signal peptide" evidence="2">
    <location>
        <begin position="1"/>
        <end position="26"/>
    </location>
</feature>
<feature type="chain" id="PRO_0000019549" description="Unique cartilage matrix-associated protein">
    <location>
        <begin position="27"/>
        <end position="138"/>
    </location>
</feature>
<feature type="propeptide" id="PRO_0000347063" description="Ucma-N">
    <location>
        <begin position="28"/>
        <end position="64"/>
    </location>
</feature>
<feature type="chain" id="PRO_0000347064" description="Unique cartilage matrix-associated protein C-terminal fragment">
    <location>
        <begin position="65"/>
        <end position="138"/>
    </location>
</feature>
<feature type="coiled-coil region" evidence="2">
    <location>
        <begin position="90"/>
        <end position="122"/>
    </location>
</feature>
<gene>
    <name type="primary">UCMA</name>
    <name type="synonym">C10orf49</name>
</gene>
<proteinExistence type="evidence at protein level"/>
<sequence>MTWRQAVLLSCFSAVVLLSMLREGTSVSVGTMQMAGEEASEDAKQKIFMQESDASNFLKRRGKRSPKSRDEVNVENRQKLRVDELRREYYEEQRNEFENFVEEQNDEQEERSREAVEQWRQWHYDGLHPSYLYNRHHT</sequence>
<reference key="1">
    <citation type="journal article" date="2004" name="Nature">
        <title>The DNA sequence and comparative analysis of human chromosome 10.</title>
        <authorList>
            <person name="Deloukas P."/>
            <person name="Earthrowl M.E."/>
            <person name="Grafham D.V."/>
            <person name="Rubenfield M."/>
            <person name="French L."/>
            <person name="Steward C.A."/>
            <person name="Sims S.K."/>
            <person name="Jones M.C."/>
            <person name="Searle S."/>
            <person name="Scott C."/>
            <person name="Howe K."/>
            <person name="Hunt S.E."/>
            <person name="Andrews T.D."/>
            <person name="Gilbert J.G.R."/>
            <person name="Swarbreck D."/>
            <person name="Ashurst J.L."/>
            <person name="Taylor A."/>
            <person name="Battles J."/>
            <person name="Bird C.P."/>
            <person name="Ainscough R."/>
            <person name="Almeida J.P."/>
            <person name="Ashwell R.I.S."/>
            <person name="Ambrose K.D."/>
            <person name="Babbage A.K."/>
            <person name="Bagguley C.L."/>
            <person name="Bailey J."/>
            <person name="Banerjee R."/>
            <person name="Bates K."/>
            <person name="Beasley H."/>
            <person name="Bray-Allen S."/>
            <person name="Brown A.J."/>
            <person name="Brown J.Y."/>
            <person name="Burford D.C."/>
            <person name="Burrill W."/>
            <person name="Burton J."/>
            <person name="Cahill P."/>
            <person name="Camire D."/>
            <person name="Carter N.P."/>
            <person name="Chapman J.C."/>
            <person name="Clark S.Y."/>
            <person name="Clarke G."/>
            <person name="Clee C.M."/>
            <person name="Clegg S."/>
            <person name="Corby N."/>
            <person name="Coulson A."/>
            <person name="Dhami P."/>
            <person name="Dutta I."/>
            <person name="Dunn M."/>
            <person name="Faulkner L."/>
            <person name="Frankish A."/>
            <person name="Frankland J.A."/>
            <person name="Garner P."/>
            <person name="Garnett J."/>
            <person name="Gribble S."/>
            <person name="Griffiths C."/>
            <person name="Grocock R."/>
            <person name="Gustafson E."/>
            <person name="Hammond S."/>
            <person name="Harley J.L."/>
            <person name="Hart E."/>
            <person name="Heath P.D."/>
            <person name="Ho T.P."/>
            <person name="Hopkins B."/>
            <person name="Horne J."/>
            <person name="Howden P.J."/>
            <person name="Huckle E."/>
            <person name="Hynds C."/>
            <person name="Johnson C."/>
            <person name="Johnson D."/>
            <person name="Kana A."/>
            <person name="Kay M."/>
            <person name="Kimberley A.M."/>
            <person name="Kershaw J.K."/>
            <person name="Kokkinaki M."/>
            <person name="Laird G.K."/>
            <person name="Lawlor S."/>
            <person name="Lee H.M."/>
            <person name="Leongamornlert D.A."/>
            <person name="Laird G."/>
            <person name="Lloyd C."/>
            <person name="Lloyd D.M."/>
            <person name="Loveland J."/>
            <person name="Lovell J."/>
            <person name="McLaren S."/>
            <person name="McLay K.E."/>
            <person name="McMurray A."/>
            <person name="Mashreghi-Mohammadi M."/>
            <person name="Matthews L."/>
            <person name="Milne S."/>
            <person name="Nickerson T."/>
            <person name="Nguyen M."/>
            <person name="Overton-Larty E."/>
            <person name="Palmer S.A."/>
            <person name="Pearce A.V."/>
            <person name="Peck A.I."/>
            <person name="Pelan S."/>
            <person name="Phillimore B."/>
            <person name="Porter K."/>
            <person name="Rice C.M."/>
            <person name="Rogosin A."/>
            <person name="Ross M.T."/>
            <person name="Sarafidou T."/>
            <person name="Sehra H.K."/>
            <person name="Shownkeen R."/>
            <person name="Skuce C.D."/>
            <person name="Smith M."/>
            <person name="Standring L."/>
            <person name="Sycamore N."/>
            <person name="Tester J."/>
            <person name="Thorpe A."/>
            <person name="Torcasso W."/>
            <person name="Tracey A."/>
            <person name="Tromans A."/>
            <person name="Tsolas J."/>
            <person name="Wall M."/>
            <person name="Walsh J."/>
            <person name="Wang H."/>
            <person name="Weinstock K."/>
            <person name="West A.P."/>
            <person name="Willey D.L."/>
            <person name="Whitehead S.L."/>
            <person name="Wilming L."/>
            <person name="Wray P.W."/>
            <person name="Young L."/>
            <person name="Chen Y."/>
            <person name="Lovering R.C."/>
            <person name="Moschonas N.K."/>
            <person name="Siebert R."/>
            <person name="Fechtel K."/>
            <person name="Bentley D."/>
            <person name="Durbin R.M."/>
            <person name="Hubbard T."/>
            <person name="Doucette-Stamm L."/>
            <person name="Beck S."/>
            <person name="Smith D.R."/>
            <person name="Rogers J."/>
        </authorList>
    </citation>
    <scope>NUCLEOTIDE SEQUENCE [LARGE SCALE GENOMIC DNA]</scope>
</reference>
<reference key="2">
    <citation type="journal article" date="2004" name="Genome Res.">
        <title>The status, quality, and expansion of the NIH full-length cDNA project: the Mammalian Gene Collection (MGC).</title>
        <authorList>
            <consortium name="The MGC Project Team"/>
        </authorList>
    </citation>
    <scope>NUCLEOTIDE SEQUENCE [LARGE SCALE MRNA]</scope>
    <source>
        <tissue>Hypothalamus</tissue>
    </source>
</reference>
<reference key="3">
    <citation type="journal article" date="2005" name="Matrix Biol.">
        <title>Expression profiling of human fetal growth plate cartilage by EST sequencing.</title>
        <authorList>
            <person name="Tagariello A."/>
            <person name="Schlaubitz S."/>
            <person name="Hankeln T."/>
            <person name="Mohrmann G."/>
            <person name="Stelzer C."/>
            <person name="Schweizer A."/>
            <person name="Hermanns P."/>
            <person name="Lee B."/>
            <person name="Schmidt E.R."/>
            <person name="Winterpacht A."/>
            <person name="Zabel B."/>
        </authorList>
    </citation>
    <scope>TISSUE SPECIFICITY</scope>
</reference>